<reference key="1">
    <citation type="journal article" date="2007" name="Science">
        <title>Legumes symbioses: absence of nod genes in photosynthetic bradyrhizobia.</title>
        <authorList>
            <person name="Giraud E."/>
            <person name="Moulin L."/>
            <person name="Vallenet D."/>
            <person name="Barbe V."/>
            <person name="Cytryn E."/>
            <person name="Avarre J.-C."/>
            <person name="Jaubert M."/>
            <person name="Simon D."/>
            <person name="Cartieaux F."/>
            <person name="Prin Y."/>
            <person name="Bena G."/>
            <person name="Hannibal L."/>
            <person name="Fardoux J."/>
            <person name="Kojadinovic M."/>
            <person name="Vuillet L."/>
            <person name="Lajus A."/>
            <person name="Cruveiller S."/>
            <person name="Rouy Z."/>
            <person name="Mangenot S."/>
            <person name="Segurens B."/>
            <person name="Dossat C."/>
            <person name="Franck W.L."/>
            <person name="Chang W.-S."/>
            <person name="Saunders E."/>
            <person name="Bruce D."/>
            <person name="Richardson P."/>
            <person name="Normand P."/>
            <person name="Dreyfus B."/>
            <person name="Pignol D."/>
            <person name="Stacey G."/>
            <person name="Emerich D."/>
            <person name="Vermeglio A."/>
            <person name="Medigue C."/>
            <person name="Sadowsky M."/>
        </authorList>
    </citation>
    <scope>NUCLEOTIDE SEQUENCE [LARGE SCALE GENOMIC DNA]</scope>
    <source>
        <strain>BTAi1 / ATCC BAA-1182</strain>
    </source>
</reference>
<keyword id="KW-1185">Reference proteome</keyword>
<keyword id="KW-0687">Ribonucleoprotein</keyword>
<keyword id="KW-0689">Ribosomal protein</keyword>
<keyword id="KW-0694">RNA-binding</keyword>
<keyword id="KW-0699">rRNA-binding</keyword>
<feature type="chain" id="PRO_1000128318" description="Small ribosomal subunit protein uS14">
    <location>
        <begin position="1"/>
        <end position="101"/>
    </location>
</feature>
<feature type="region of interest" description="Disordered" evidence="2">
    <location>
        <begin position="1"/>
        <end position="23"/>
    </location>
</feature>
<feature type="compositionally biased region" description="Basic and acidic residues" evidence="2">
    <location>
        <begin position="1"/>
        <end position="10"/>
    </location>
</feature>
<feature type="compositionally biased region" description="Basic residues" evidence="2">
    <location>
        <begin position="11"/>
        <end position="23"/>
    </location>
</feature>
<gene>
    <name evidence="1" type="primary">rpsN</name>
    <name type="ordered locus">BBta_5057</name>
</gene>
<proteinExistence type="inferred from homology"/>
<organism>
    <name type="scientific">Bradyrhizobium sp. (strain BTAi1 / ATCC BAA-1182)</name>
    <dbReference type="NCBI Taxonomy" id="288000"/>
    <lineage>
        <taxon>Bacteria</taxon>
        <taxon>Pseudomonadati</taxon>
        <taxon>Pseudomonadota</taxon>
        <taxon>Alphaproteobacteria</taxon>
        <taxon>Hyphomicrobiales</taxon>
        <taxon>Nitrobacteraceae</taxon>
        <taxon>Bradyrhizobium</taxon>
    </lineage>
</organism>
<protein>
    <recommendedName>
        <fullName evidence="1">Small ribosomal subunit protein uS14</fullName>
    </recommendedName>
    <alternativeName>
        <fullName evidence="3">30S ribosomal protein S14</fullName>
    </alternativeName>
</protein>
<evidence type="ECO:0000255" key="1">
    <source>
        <dbReference type="HAMAP-Rule" id="MF_00537"/>
    </source>
</evidence>
<evidence type="ECO:0000256" key="2">
    <source>
        <dbReference type="SAM" id="MobiDB-lite"/>
    </source>
</evidence>
<evidence type="ECO:0000305" key="3"/>
<accession>A5ELL4</accession>
<dbReference type="EMBL" id="CP000494">
    <property type="protein sequence ID" value="ABQ37058.1"/>
    <property type="molecule type" value="Genomic_DNA"/>
</dbReference>
<dbReference type="RefSeq" id="WP_012045038.1">
    <property type="nucleotide sequence ID" value="NC_009485.1"/>
</dbReference>
<dbReference type="SMR" id="A5ELL4"/>
<dbReference type="STRING" id="288000.BBta_5057"/>
<dbReference type="KEGG" id="bbt:BBta_5057"/>
<dbReference type="eggNOG" id="COG0199">
    <property type="taxonomic scope" value="Bacteria"/>
</dbReference>
<dbReference type="HOGENOM" id="CLU_139869_0_1_5"/>
<dbReference type="OrthoDB" id="9810484at2"/>
<dbReference type="Proteomes" id="UP000000246">
    <property type="component" value="Chromosome"/>
</dbReference>
<dbReference type="GO" id="GO:0005737">
    <property type="term" value="C:cytoplasm"/>
    <property type="evidence" value="ECO:0007669"/>
    <property type="project" value="UniProtKB-ARBA"/>
</dbReference>
<dbReference type="GO" id="GO:0015935">
    <property type="term" value="C:small ribosomal subunit"/>
    <property type="evidence" value="ECO:0007669"/>
    <property type="project" value="TreeGrafter"/>
</dbReference>
<dbReference type="GO" id="GO:0019843">
    <property type="term" value="F:rRNA binding"/>
    <property type="evidence" value="ECO:0007669"/>
    <property type="project" value="UniProtKB-UniRule"/>
</dbReference>
<dbReference type="GO" id="GO:0003735">
    <property type="term" value="F:structural constituent of ribosome"/>
    <property type="evidence" value="ECO:0007669"/>
    <property type="project" value="InterPro"/>
</dbReference>
<dbReference type="GO" id="GO:0006412">
    <property type="term" value="P:translation"/>
    <property type="evidence" value="ECO:0007669"/>
    <property type="project" value="UniProtKB-UniRule"/>
</dbReference>
<dbReference type="FunFam" id="1.10.287.1480:FF:000001">
    <property type="entry name" value="30S ribosomal protein S14"/>
    <property type="match status" value="1"/>
</dbReference>
<dbReference type="Gene3D" id="1.10.287.1480">
    <property type="match status" value="1"/>
</dbReference>
<dbReference type="HAMAP" id="MF_00537">
    <property type="entry name" value="Ribosomal_uS14_1"/>
    <property type="match status" value="1"/>
</dbReference>
<dbReference type="InterPro" id="IPR001209">
    <property type="entry name" value="Ribosomal_uS14"/>
</dbReference>
<dbReference type="InterPro" id="IPR023036">
    <property type="entry name" value="Ribosomal_uS14_bac/plastid"/>
</dbReference>
<dbReference type="NCBIfam" id="NF006477">
    <property type="entry name" value="PRK08881.1"/>
    <property type="match status" value="1"/>
</dbReference>
<dbReference type="PANTHER" id="PTHR19836">
    <property type="entry name" value="30S RIBOSOMAL PROTEIN S14"/>
    <property type="match status" value="1"/>
</dbReference>
<dbReference type="PANTHER" id="PTHR19836:SF19">
    <property type="entry name" value="SMALL RIBOSOMAL SUBUNIT PROTEIN US14M"/>
    <property type="match status" value="1"/>
</dbReference>
<dbReference type="Pfam" id="PF00253">
    <property type="entry name" value="Ribosomal_S14"/>
    <property type="match status" value="1"/>
</dbReference>
<dbReference type="SUPFAM" id="SSF57716">
    <property type="entry name" value="Glucocorticoid receptor-like (DNA-binding domain)"/>
    <property type="match status" value="1"/>
</dbReference>
<comment type="function">
    <text evidence="1">Binds 16S rRNA, required for the assembly of 30S particles and may also be responsible for determining the conformation of the 16S rRNA at the A site.</text>
</comment>
<comment type="subunit">
    <text evidence="1">Part of the 30S ribosomal subunit. Contacts proteins S3 and S10.</text>
</comment>
<comment type="similarity">
    <text evidence="1">Belongs to the universal ribosomal protein uS14 family.</text>
</comment>
<name>RS14_BRASB</name>
<sequence length="101" mass="11492">MAKKSSVEKNNRRKRMAKNAAPKRARLKAIIADKTKPMEERFAATLKLAEMPRNSSATRIRNRCELTGRPRSNYRKNKLSRIALRELGSKGLVPGLVKSSW</sequence>